<protein>
    <recommendedName>
        <fullName evidence="1">Orotate phosphoribosyltransferase</fullName>
        <shortName evidence="1">OPRT</shortName>
        <shortName evidence="1">OPRTase</shortName>
        <ecNumber evidence="1">2.4.2.10</ecNumber>
    </recommendedName>
</protein>
<comment type="function">
    <text evidence="1">Catalyzes the transfer of a ribosyl phosphate group from 5-phosphoribose 1-diphosphate to orotate, leading to the formation of orotidine monophosphate (OMP).</text>
</comment>
<comment type="catalytic activity">
    <reaction evidence="1">
        <text>orotidine 5'-phosphate + diphosphate = orotate + 5-phospho-alpha-D-ribose 1-diphosphate</text>
        <dbReference type="Rhea" id="RHEA:10380"/>
        <dbReference type="ChEBI" id="CHEBI:30839"/>
        <dbReference type="ChEBI" id="CHEBI:33019"/>
        <dbReference type="ChEBI" id="CHEBI:57538"/>
        <dbReference type="ChEBI" id="CHEBI:58017"/>
        <dbReference type="EC" id="2.4.2.10"/>
    </reaction>
</comment>
<comment type="cofactor">
    <cofactor evidence="1">
        <name>Mg(2+)</name>
        <dbReference type="ChEBI" id="CHEBI:18420"/>
    </cofactor>
</comment>
<comment type="pathway">
    <text evidence="1">Pyrimidine metabolism; UMP biosynthesis via de novo pathway; UMP from orotate: step 1/2.</text>
</comment>
<comment type="subunit">
    <text evidence="1">Homodimer.</text>
</comment>
<comment type="similarity">
    <text evidence="1">Belongs to the purine/pyrimidine phosphoribosyltransferase family. PyrE subfamily.</text>
</comment>
<keyword id="KW-0328">Glycosyltransferase</keyword>
<keyword id="KW-0460">Magnesium</keyword>
<keyword id="KW-0665">Pyrimidine biosynthesis</keyword>
<keyword id="KW-0808">Transferase</keyword>
<name>PYRE_LEPBJ</name>
<sequence length="187" mass="20987">MKQKLLELILTHAYRYSEQPFTLASGKKSRHYFNCKEITLVPDRLELLCKFIVERHLDESGILKPQAFGGLTMGADPICYGISLEFRKQDKNIYPLIVRKFSKDHGTNKLVEGAVHEVKSCVIVDDVITTGGSTIQAIRSMRDSGIVVVQGICILDRQEGGMDAILAEGVQMFPIFKKSDFGNLEHE</sequence>
<accession>Q04R73</accession>
<dbReference type="EC" id="2.4.2.10" evidence="1"/>
<dbReference type="EMBL" id="CP000350">
    <property type="protein sequence ID" value="ABJ76597.1"/>
    <property type="molecule type" value="Genomic_DNA"/>
</dbReference>
<dbReference type="RefSeq" id="WP_002750046.1">
    <property type="nucleotide sequence ID" value="NC_008510.1"/>
</dbReference>
<dbReference type="SMR" id="Q04R73"/>
<dbReference type="KEGG" id="lbj:LBJ_2101"/>
<dbReference type="HOGENOM" id="CLU_074878_2_1_12"/>
<dbReference type="UniPathway" id="UPA00070">
    <property type="reaction ID" value="UER00119"/>
</dbReference>
<dbReference type="Proteomes" id="UP000000656">
    <property type="component" value="Chromosome 1"/>
</dbReference>
<dbReference type="GO" id="GO:0000287">
    <property type="term" value="F:magnesium ion binding"/>
    <property type="evidence" value="ECO:0007669"/>
    <property type="project" value="UniProtKB-UniRule"/>
</dbReference>
<dbReference type="GO" id="GO:0004588">
    <property type="term" value="F:orotate phosphoribosyltransferase activity"/>
    <property type="evidence" value="ECO:0007669"/>
    <property type="project" value="UniProtKB-UniRule"/>
</dbReference>
<dbReference type="GO" id="GO:0044205">
    <property type="term" value="P:'de novo' UMP biosynthetic process"/>
    <property type="evidence" value="ECO:0007669"/>
    <property type="project" value="UniProtKB-UniRule"/>
</dbReference>
<dbReference type="GO" id="GO:0019856">
    <property type="term" value="P:pyrimidine nucleobase biosynthetic process"/>
    <property type="evidence" value="ECO:0007669"/>
    <property type="project" value="TreeGrafter"/>
</dbReference>
<dbReference type="CDD" id="cd06223">
    <property type="entry name" value="PRTases_typeI"/>
    <property type="match status" value="1"/>
</dbReference>
<dbReference type="Gene3D" id="3.40.50.2020">
    <property type="match status" value="1"/>
</dbReference>
<dbReference type="HAMAP" id="MF_01208">
    <property type="entry name" value="PyrE"/>
    <property type="match status" value="1"/>
</dbReference>
<dbReference type="InterPro" id="IPR023031">
    <property type="entry name" value="OPRT"/>
</dbReference>
<dbReference type="InterPro" id="IPR004467">
    <property type="entry name" value="Or_phspho_trans_dom"/>
</dbReference>
<dbReference type="InterPro" id="IPR000836">
    <property type="entry name" value="PRibTrfase_dom"/>
</dbReference>
<dbReference type="InterPro" id="IPR029057">
    <property type="entry name" value="PRTase-like"/>
</dbReference>
<dbReference type="NCBIfam" id="TIGR00336">
    <property type="entry name" value="pyrE"/>
    <property type="match status" value="1"/>
</dbReference>
<dbReference type="PANTHER" id="PTHR19278">
    <property type="entry name" value="OROTATE PHOSPHORIBOSYLTRANSFERASE"/>
    <property type="match status" value="1"/>
</dbReference>
<dbReference type="PANTHER" id="PTHR19278:SF9">
    <property type="entry name" value="URIDINE 5'-MONOPHOSPHATE SYNTHASE"/>
    <property type="match status" value="1"/>
</dbReference>
<dbReference type="Pfam" id="PF00156">
    <property type="entry name" value="Pribosyltran"/>
    <property type="match status" value="1"/>
</dbReference>
<dbReference type="SUPFAM" id="SSF53271">
    <property type="entry name" value="PRTase-like"/>
    <property type="match status" value="1"/>
</dbReference>
<dbReference type="PROSITE" id="PS00103">
    <property type="entry name" value="PUR_PYR_PR_TRANSFER"/>
    <property type="match status" value="1"/>
</dbReference>
<reference key="1">
    <citation type="journal article" date="2006" name="Proc. Natl. Acad. Sci. U.S.A.">
        <title>Genome reduction in Leptospira borgpetersenii reflects limited transmission potential.</title>
        <authorList>
            <person name="Bulach D.M."/>
            <person name="Zuerner R.L."/>
            <person name="Wilson P."/>
            <person name="Seemann T."/>
            <person name="McGrath A."/>
            <person name="Cullen P.A."/>
            <person name="Davis J."/>
            <person name="Johnson M."/>
            <person name="Kuczek E."/>
            <person name="Alt D.P."/>
            <person name="Peterson-Burch B."/>
            <person name="Coppel R.L."/>
            <person name="Rood J.I."/>
            <person name="Davies J.K."/>
            <person name="Adler B."/>
        </authorList>
    </citation>
    <scope>NUCLEOTIDE SEQUENCE [LARGE SCALE GENOMIC DNA]</scope>
    <source>
        <strain>JB197</strain>
    </source>
</reference>
<organism>
    <name type="scientific">Leptospira borgpetersenii serovar Hardjo-bovis (strain JB197)</name>
    <dbReference type="NCBI Taxonomy" id="355277"/>
    <lineage>
        <taxon>Bacteria</taxon>
        <taxon>Pseudomonadati</taxon>
        <taxon>Spirochaetota</taxon>
        <taxon>Spirochaetia</taxon>
        <taxon>Leptospirales</taxon>
        <taxon>Leptospiraceae</taxon>
        <taxon>Leptospira</taxon>
    </lineage>
</organism>
<gene>
    <name evidence="1" type="primary">pyrE</name>
    <name type="ordered locus">LBJ_2101</name>
</gene>
<proteinExistence type="inferred from homology"/>
<evidence type="ECO:0000255" key="1">
    <source>
        <dbReference type="HAMAP-Rule" id="MF_01208"/>
    </source>
</evidence>
<feature type="chain" id="PRO_1000138801" description="Orotate phosphoribosyltransferase">
    <location>
        <begin position="1"/>
        <end position="187"/>
    </location>
</feature>
<feature type="binding site" evidence="1">
    <location>
        <position position="99"/>
    </location>
    <ligand>
        <name>5-phospho-alpha-D-ribose 1-diphosphate</name>
        <dbReference type="ChEBI" id="CHEBI:58017"/>
        <note>ligand shared between dimeric partners</note>
    </ligand>
</feature>
<feature type="binding site" description="in other chain" evidence="1">
    <location>
        <position position="100"/>
    </location>
    <ligand>
        <name>5-phospho-alpha-D-ribose 1-diphosphate</name>
        <dbReference type="ChEBI" id="CHEBI:58017"/>
        <note>ligand shared between dimeric partners</note>
    </ligand>
</feature>
<feature type="binding site" evidence="1">
    <location>
        <position position="103"/>
    </location>
    <ligand>
        <name>5-phospho-alpha-D-ribose 1-diphosphate</name>
        <dbReference type="ChEBI" id="CHEBI:58017"/>
        <note>ligand shared between dimeric partners</note>
    </ligand>
</feature>
<feature type="binding site" evidence="1">
    <location>
        <position position="105"/>
    </location>
    <ligand>
        <name>5-phospho-alpha-D-ribose 1-diphosphate</name>
        <dbReference type="ChEBI" id="CHEBI:58017"/>
        <note>ligand shared between dimeric partners</note>
    </ligand>
</feature>
<feature type="binding site" description="in other chain" evidence="1">
    <location>
        <begin position="125"/>
        <end position="133"/>
    </location>
    <ligand>
        <name>5-phospho-alpha-D-ribose 1-diphosphate</name>
        <dbReference type="ChEBI" id="CHEBI:58017"/>
        <note>ligand shared between dimeric partners</note>
    </ligand>
</feature>
<feature type="binding site" evidence="1">
    <location>
        <position position="129"/>
    </location>
    <ligand>
        <name>orotate</name>
        <dbReference type="ChEBI" id="CHEBI:30839"/>
    </ligand>
</feature>
<feature type="binding site" evidence="1">
    <location>
        <position position="157"/>
    </location>
    <ligand>
        <name>orotate</name>
        <dbReference type="ChEBI" id="CHEBI:30839"/>
    </ligand>
</feature>